<reference key="1">
    <citation type="journal article" date="2005" name="Science">
        <title>The transcriptional landscape of the mammalian genome.</title>
        <authorList>
            <person name="Carninci P."/>
            <person name="Kasukawa T."/>
            <person name="Katayama S."/>
            <person name="Gough J."/>
            <person name="Frith M.C."/>
            <person name="Maeda N."/>
            <person name="Oyama R."/>
            <person name="Ravasi T."/>
            <person name="Lenhard B."/>
            <person name="Wells C."/>
            <person name="Kodzius R."/>
            <person name="Shimokawa K."/>
            <person name="Bajic V.B."/>
            <person name="Brenner S.E."/>
            <person name="Batalov S."/>
            <person name="Forrest A.R."/>
            <person name="Zavolan M."/>
            <person name="Davis M.J."/>
            <person name="Wilming L.G."/>
            <person name="Aidinis V."/>
            <person name="Allen J.E."/>
            <person name="Ambesi-Impiombato A."/>
            <person name="Apweiler R."/>
            <person name="Aturaliya R.N."/>
            <person name="Bailey T.L."/>
            <person name="Bansal M."/>
            <person name="Baxter L."/>
            <person name="Beisel K.W."/>
            <person name="Bersano T."/>
            <person name="Bono H."/>
            <person name="Chalk A.M."/>
            <person name="Chiu K.P."/>
            <person name="Choudhary V."/>
            <person name="Christoffels A."/>
            <person name="Clutterbuck D.R."/>
            <person name="Crowe M.L."/>
            <person name="Dalla E."/>
            <person name="Dalrymple B.P."/>
            <person name="de Bono B."/>
            <person name="Della Gatta G."/>
            <person name="di Bernardo D."/>
            <person name="Down T."/>
            <person name="Engstrom P."/>
            <person name="Fagiolini M."/>
            <person name="Faulkner G."/>
            <person name="Fletcher C.F."/>
            <person name="Fukushima T."/>
            <person name="Furuno M."/>
            <person name="Futaki S."/>
            <person name="Gariboldi M."/>
            <person name="Georgii-Hemming P."/>
            <person name="Gingeras T.R."/>
            <person name="Gojobori T."/>
            <person name="Green R.E."/>
            <person name="Gustincich S."/>
            <person name="Harbers M."/>
            <person name="Hayashi Y."/>
            <person name="Hensch T.K."/>
            <person name="Hirokawa N."/>
            <person name="Hill D."/>
            <person name="Huminiecki L."/>
            <person name="Iacono M."/>
            <person name="Ikeo K."/>
            <person name="Iwama A."/>
            <person name="Ishikawa T."/>
            <person name="Jakt M."/>
            <person name="Kanapin A."/>
            <person name="Katoh M."/>
            <person name="Kawasawa Y."/>
            <person name="Kelso J."/>
            <person name="Kitamura H."/>
            <person name="Kitano H."/>
            <person name="Kollias G."/>
            <person name="Krishnan S.P."/>
            <person name="Kruger A."/>
            <person name="Kummerfeld S.K."/>
            <person name="Kurochkin I.V."/>
            <person name="Lareau L.F."/>
            <person name="Lazarevic D."/>
            <person name="Lipovich L."/>
            <person name="Liu J."/>
            <person name="Liuni S."/>
            <person name="McWilliam S."/>
            <person name="Madan Babu M."/>
            <person name="Madera M."/>
            <person name="Marchionni L."/>
            <person name="Matsuda H."/>
            <person name="Matsuzawa S."/>
            <person name="Miki H."/>
            <person name="Mignone F."/>
            <person name="Miyake S."/>
            <person name="Morris K."/>
            <person name="Mottagui-Tabar S."/>
            <person name="Mulder N."/>
            <person name="Nakano N."/>
            <person name="Nakauchi H."/>
            <person name="Ng P."/>
            <person name="Nilsson R."/>
            <person name="Nishiguchi S."/>
            <person name="Nishikawa S."/>
            <person name="Nori F."/>
            <person name="Ohara O."/>
            <person name="Okazaki Y."/>
            <person name="Orlando V."/>
            <person name="Pang K.C."/>
            <person name="Pavan W.J."/>
            <person name="Pavesi G."/>
            <person name="Pesole G."/>
            <person name="Petrovsky N."/>
            <person name="Piazza S."/>
            <person name="Reed J."/>
            <person name="Reid J.F."/>
            <person name="Ring B.Z."/>
            <person name="Ringwald M."/>
            <person name="Rost B."/>
            <person name="Ruan Y."/>
            <person name="Salzberg S.L."/>
            <person name="Sandelin A."/>
            <person name="Schneider C."/>
            <person name="Schoenbach C."/>
            <person name="Sekiguchi K."/>
            <person name="Semple C.A."/>
            <person name="Seno S."/>
            <person name="Sessa L."/>
            <person name="Sheng Y."/>
            <person name="Shibata Y."/>
            <person name="Shimada H."/>
            <person name="Shimada K."/>
            <person name="Silva D."/>
            <person name="Sinclair B."/>
            <person name="Sperling S."/>
            <person name="Stupka E."/>
            <person name="Sugiura K."/>
            <person name="Sultana R."/>
            <person name="Takenaka Y."/>
            <person name="Taki K."/>
            <person name="Tammoja K."/>
            <person name="Tan S.L."/>
            <person name="Tang S."/>
            <person name="Taylor M.S."/>
            <person name="Tegner J."/>
            <person name="Teichmann S.A."/>
            <person name="Ueda H.R."/>
            <person name="van Nimwegen E."/>
            <person name="Verardo R."/>
            <person name="Wei C.L."/>
            <person name="Yagi K."/>
            <person name="Yamanishi H."/>
            <person name="Zabarovsky E."/>
            <person name="Zhu S."/>
            <person name="Zimmer A."/>
            <person name="Hide W."/>
            <person name="Bult C."/>
            <person name="Grimmond S.M."/>
            <person name="Teasdale R.D."/>
            <person name="Liu E.T."/>
            <person name="Brusic V."/>
            <person name="Quackenbush J."/>
            <person name="Wahlestedt C."/>
            <person name="Mattick J.S."/>
            <person name="Hume D.A."/>
            <person name="Kai C."/>
            <person name="Sasaki D."/>
            <person name="Tomaru Y."/>
            <person name="Fukuda S."/>
            <person name="Kanamori-Katayama M."/>
            <person name="Suzuki M."/>
            <person name="Aoki J."/>
            <person name="Arakawa T."/>
            <person name="Iida J."/>
            <person name="Imamura K."/>
            <person name="Itoh M."/>
            <person name="Kato T."/>
            <person name="Kawaji H."/>
            <person name="Kawagashira N."/>
            <person name="Kawashima T."/>
            <person name="Kojima M."/>
            <person name="Kondo S."/>
            <person name="Konno H."/>
            <person name="Nakano K."/>
            <person name="Ninomiya N."/>
            <person name="Nishio T."/>
            <person name="Okada M."/>
            <person name="Plessy C."/>
            <person name="Shibata K."/>
            <person name="Shiraki T."/>
            <person name="Suzuki S."/>
            <person name="Tagami M."/>
            <person name="Waki K."/>
            <person name="Watahiki A."/>
            <person name="Okamura-Oho Y."/>
            <person name="Suzuki H."/>
            <person name="Kawai J."/>
            <person name="Hayashizaki Y."/>
        </authorList>
    </citation>
    <scope>NUCLEOTIDE SEQUENCE [LARGE SCALE MRNA] (ISOFORM 1)</scope>
    <scope>NUCLEOTIDE SEQUENCE [LARGE SCALE MRNA] OF 1-231 (ISOFORM 2)</scope>
    <source>
        <strain>C57BL/6J</strain>
        <tissue>Testis</tissue>
    </source>
</reference>
<reference key="2">
    <citation type="journal article" date="2009" name="PLoS Biol.">
        <title>Lineage-specific biology revealed by a finished genome assembly of the mouse.</title>
        <authorList>
            <person name="Church D.M."/>
            <person name="Goodstadt L."/>
            <person name="Hillier L.W."/>
            <person name="Zody M.C."/>
            <person name="Goldstein S."/>
            <person name="She X."/>
            <person name="Bult C.J."/>
            <person name="Agarwala R."/>
            <person name="Cherry J.L."/>
            <person name="DiCuccio M."/>
            <person name="Hlavina W."/>
            <person name="Kapustin Y."/>
            <person name="Meric P."/>
            <person name="Maglott D."/>
            <person name="Birtle Z."/>
            <person name="Marques A.C."/>
            <person name="Graves T."/>
            <person name="Zhou S."/>
            <person name="Teague B."/>
            <person name="Potamousis K."/>
            <person name="Churas C."/>
            <person name="Place M."/>
            <person name="Herschleb J."/>
            <person name="Runnheim R."/>
            <person name="Forrest D."/>
            <person name="Amos-Landgraf J."/>
            <person name="Schwartz D.C."/>
            <person name="Cheng Z."/>
            <person name="Lindblad-Toh K."/>
            <person name="Eichler E.E."/>
            <person name="Ponting C.P."/>
        </authorList>
    </citation>
    <scope>NUCLEOTIDE SEQUENCE [LARGE SCALE GENOMIC DNA]</scope>
    <source>
        <strain>C57BL/6J</strain>
    </source>
</reference>
<reference key="3">
    <citation type="journal article" date="2004" name="Genome Res.">
        <title>The status, quality, and expansion of the NIH full-length cDNA project: the Mammalian Gene Collection (MGC).</title>
        <authorList>
            <consortium name="The MGC Project Team"/>
        </authorList>
    </citation>
    <scope>NUCLEOTIDE SEQUENCE [LARGE SCALE MRNA] (ISOFORM 1)</scope>
    <source>
        <tissue>Testis</tissue>
    </source>
</reference>
<reference key="4">
    <citation type="journal article" date="2010" name="Cell">
        <title>A tissue-specific atlas of mouse protein phosphorylation and expression.</title>
        <authorList>
            <person name="Huttlin E.L."/>
            <person name="Jedrychowski M.P."/>
            <person name="Elias J.E."/>
            <person name="Goswami T."/>
            <person name="Rad R."/>
            <person name="Beausoleil S.A."/>
            <person name="Villen J."/>
            <person name="Haas W."/>
            <person name="Sowa M.E."/>
            <person name="Gygi S.P."/>
        </authorList>
    </citation>
    <scope>IDENTIFICATION BY MASS SPECTROMETRY [LARGE SCALE ANALYSIS]</scope>
    <source>
        <tissue>Testis</tissue>
    </source>
</reference>
<reference key="5">
    <citation type="journal article" date="2017" name="PLoS ONE">
        <title>Expression of uncharacterized male germ cell-specific genes and discovery of novel sperm-tail proteins in mice.</title>
        <authorList>
            <person name="Kwon J.T."/>
            <person name="Ham S."/>
            <person name="Jeon S."/>
            <person name="Kim Y."/>
            <person name="Oh S."/>
            <person name="Cho C."/>
        </authorList>
    </citation>
    <scope>TISSUE SPECIFICITY</scope>
    <scope>DEVELOPMENTAL STAGE</scope>
</reference>
<sequence>MEILRLAQSKKNIISLNMDLERDMQRIDEANQELLLEIQEKENEIQRLEHEITQTGNPAEDEEWEKENYTVMEREQALQELEEETARLERKNETLVHSISELQRKLTRKSQKVIRYEQGDLETTPEESKVKLQQLESSCADQEKELGKIMEDYVFVSQLCEDQALCIKKYQEALKRIEEELETGYLEREVSKVLSMDSERERSTSLNKMDGFISKGALRFSKSIFRSLLFSTLFFIRLLGYLIFHLSFINPDLLVNALPKILSRDVLWKLRCFLFPSLTLETEDMLPH</sequence>
<evidence type="ECO:0000250" key="1">
    <source>
        <dbReference type="UniProtKB" id="D3ZNV2"/>
    </source>
</evidence>
<evidence type="ECO:0000255" key="2"/>
<evidence type="ECO:0000269" key="3">
    <source>
    </source>
</evidence>
<evidence type="ECO:0000303" key="4">
    <source>
    </source>
</evidence>
<evidence type="ECO:0000305" key="5"/>
<keyword id="KW-0025">Alternative splicing</keyword>
<keyword id="KW-0175">Coiled coil</keyword>
<keyword id="KW-0256">Endoplasmic reticulum</keyword>
<keyword id="KW-0472">Membrane</keyword>
<keyword id="KW-0539">Nucleus</keyword>
<keyword id="KW-1185">Reference proteome</keyword>
<keyword id="KW-0812">Transmembrane</keyword>
<keyword id="KW-1133">Transmembrane helix</keyword>
<comment type="subcellular location">
    <subcellularLocation>
        <location evidence="1">Endoplasmic reticulum membrane</location>
        <topology evidence="2">Single-pass membrane protein</topology>
    </subcellularLocation>
    <subcellularLocation>
        <location evidence="1">Nucleus membrane</location>
        <topology evidence="2">Single-pass membrane protein</topology>
    </subcellularLocation>
</comment>
<comment type="alternative products">
    <event type="alternative splicing"/>
    <isoform>
        <id>Q9D9D5-1</id>
        <name>1</name>
        <sequence type="displayed"/>
    </isoform>
    <isoform>
        <id>Q9D9D5-2</id>
        <name>2</name>
        <sequence type="described" ref="VSP_028248"/>
    </isoform>
</comment>
<comment type="tissue specificity">
    <text evidence="3">Only detected in testis (at protein level).</text>
</comment>
<comment type="developmental stage">
    <text evidence="3">Detected in testis at 28 days after birth and expression is maintained (PubMed:28742876). Expressed by testicular cells and testicular sperm but not mature sperm (PubMed:28742876).</text>
</comment>
<comment type="similarity">
    <text evidence="5">Belongs to the TMCO5 family.</text>
</comment>
<comment type="sequence caution" evidence="5">
    <conflict type="erroneous initiation">
        <sequence resource="EMBL-CDS" id="AAH49568"/>
    </conflict>
    <text>Extended N-terminus.</text>
</comment>
<comment type="sequence caution" evidence="5">
    <conflict type="erroneous initiation">
        <sequence resource="EMBL-CDS" id="BAB24853"/>
    </conflict>
    <text>Extended N-terminus.</text>
</comment>
<comment type="sequence caution" evidence="5">
    <conflict type="erroneous initiation">
        <sequence resource="EMBL-CDS" id="BAB24916"/>
    </conflict>
    <text>Extended N-terminus.</text>
</comment>
<proteinExistence type="evidence at protein level"/>
<gene>
    <name type="primary">Tmco5a</name>
    <name type="synonym">Tmco5</name>
</gene>
<dbReference type="EMBL" id="AK007078">
    <property type="protein sequence ID" value="BAB24853.1"/>
    <property type="status" value="ALT_INIT"/>
    <property type="molecule type" value="mRNA"/>
</dbReference>
<dbReference type="EMBL" id="AK007251">
    <property type="protein sequence ID" value="BAB24916.1"/>
    <property type="status" value="ALT_INIT"/>
    <property type="molecule type" value="mRNA"/>
</dbReference>
<dbReference type="EMBL" id="AL845318">
    <property type="status" value="NOT_ANNOTATED_CDS"/>
    <property type="molecule type" value="Genomic_DNA"/>
</dbReference>
<dbReference type="EMBL" id="BC049568">
    <property type="protein sequence ID" value="AAH49568.1"/>
    <property type="status" value="ALT_INIT"/>
    <property type="molecule type" value="mRNA"/>
</dbReference>
<dbReference type="CCDS" id="CCDS16569.1">
    <molecule id="Q9D9D5-1"/>
</dbReference>
<dbReference type="RefSeq" id="NP_080380.1">
    <property type="nucleotide sequence ID" value="NM_026104.4"/>
</dbReference>
<dbReference type="SMR" id="Q9D9D5"/>
<dbReference type="FunCoup" id="Q9D9D5">
    <property type="interactions" value="3"/>
</dbReference>
<dbReference type="STRING" id="10090.ENSMUSP00000028834"/>
<dbReference type="iPTMnet" id="Q9D9D5"/>
<dbReference type="PhosphoSitePlus" id="Q9D9D5"/>
<dbReference type="jPOST" id="Q9D9D5"/>
<dbReference type="PaxDb" id="10090-ENSMUSP00000028834"/>
<dbReference type="ProteomicsDB" id="259238">
    <molecule id="Q9D9D5-1"/>
</dbReference>
<dbReference type="ProteomicsDB" id="259239">
    <molecule id="Q9D9D5-2"/>
</dbReference>
<dbReference type="Antibodypedia" id="67483">
    <property type="antibodies" value="28 antibodies from 8 providers"/>
</dbReference>
<dbReference type="DNASU" id="67356"/>
<dbReference type="GeneID" id="67356"/>
<dbReference type="KEGG" id="mmu:67356"/>
<dbReference type="UCSC" id="uc008lre.2">
    <molecule id="Q9D9D5-1"/>
    <property type="organism name" value="mouse"/>
</dbReference>
<dbReference type="UCSC" id="uc008lrf.2">
    <molecule id="Q9D9D5-2"/>
    <property type="organism name" value="mouse"/>
</dbReference>
<dbReference type="AGR" id="MGI:1914606"/>
<dbReference type="CTD" id="67356"/>
<dbReference type="MGI" id="MGI:1914606">
    <property type="gene designation" value="Tmco5"/>
</dbReference>
<dbReference type="VEuPathDB" id="HostDB:ENSMUSG00000027355"/>
<dbReference type="eggNOG" id="ENOG502TDSB">
    <property type="taxonomic scope" value="Eukaryota"/>
</dbReference>
<dbReference type="HOGENOM" id="CLU_061400_0_0_1"/>
<dbReference type="InParanoid" id="Q9D9D5"/>
<dbReference type="OMA" id="CTTMERE"/>
<dbReference type="OrthoDB" id="9836264at2759"/>
<dbReference type="PhylomeDB" id="Q9D9D5"/>
<dbReference type="TreeFam" id="TF337140"/>
<dbReference type="BioGRID-ORCS" id="67356">
    <property type="hits" value="4 hits in 77 CRISPR screens"/>
</dbReference>
<dbReference type="PRO" id="PR:Q9D9D5"/>
<dbReference type="Proteomes" id="UP000000589">
    <property type="component" value="Chromosome 2"/>
</dbReference>
<dbReference type="RNAct" id="Q9D9D5">
    <property type="molecule type" value="protein"/>
</dbReference>
<dbReference type="Bgee" id="ENSMUSG00000027355">
    <property type="expression patterns" value="Expressed in spermatid and 24 other cell types or tissues"/>
</dbReference>
<dbReference type="ExpressionAtlas" id="Q9D9D5">
    <property type="expression patterns" value="baseline and differential"/>
</dbReference>
<dbReference type="GO" id="GO:0005789">
    <property type="term" value="C:endoplasmic reticulum membrane"/>
    <property type="evidence" value="ECO:0007669"/>
    <property type="project" value="UniProtKB-SubCell"/>
</dbReference>
<dbReference type="GO" id="GO:0031965">
    <property type="term" value="C:nuclear membrane"/>
    <property type="evidence" value="ECO:0007669"/>
    <property type="project" value="UniProtKB-SubCell"/>
</dbReference>
<dbReference type="InterPro" id="IPR026617">
    <property type="entry name" value="SMCO2/5"/>
</dbReference>
<dbReference type="PANTHER" id="PTHR22422:SF7">
    <property type="entry name" value="TRANSMEMBRANE AND COILED-COIL DOMAIN-CONTAINING PROTEIN 5A"/>
    <property type="match status" value="1"/>
</dbReference>
<dbReference type="PANTHER" id="PTHR22422">
    <property type="entry name" value="TRANSMEMBRANE AND COILED-COIL DOMAIN-CONTAINING PROTEIN 5B-RELATED"/>
    <property type="match status" value="1"/>
</dbReference>
<dbReference type="Pfam" id="PF14992">
    <property type="entry name" value="TMCO5"/>
    <property type="match status" value="1"/>
</dbReference>
<accession>Q9D9D5</accession>
<accession>A2ARB1</accession>
<accession>Q9CVN5</accession>
<feature type="chain" id="PRO_0000305154" description="Transmembrane and coiled-coil domain-containing protein 5A">
    <location>
        <begin position="1"/>
        <end position="288"/>
    </location>
</feature>
<feature type="transmembrane region" description="Helical" evidence="2">
    <location>
        <begin position="227"/>
        <end position="249"/>
    </location>
</feature>
<feature type="coiled-coil region" evidence="2">
    <location>
        <begin position="10"/>
        <end position="189"/>
    </location>
</feature>
<feature type="splice variant" id="VSP_028248" description="In isoform 2." evidence="4">
    <location>
        <begin position="148"/>
        <end position="167"/>
    </location>
</feature>
<protein>
    <recommendedName>
        <fullName>Transmembrane and coiled-coil domain-containing protein 5A</fullName>
    </recommendedName>
</protein>
<name>TMC5A_MOUSE</name>
<organism>
    <name type="scientific">Mus musculus</name>
    <name type="common">Mouse</name>
    <dbReference type="NCBI Taxonomy" id="10090"/>
    <lineage>
        <taxon>Eukaryota</taxon>
        <taxon>Metazoa</taxon>
        <taxon>Chordata</taxon>
        <taxon>Craniata</taxon>
        <taxon>Vertebrata</taxon>
        <taxon>Euteleostomi</taxon>
        <taxon>Mammalia</taxon>
        <taxon>Eutheria</taxon>
        <taxon>Euarchontoglires</taxon>
        <taxon>Glires</taxon>
        <taxon>Rodentia</taxon>
        <taxon>Myomorpha</taxon>
        <taxon>Muroidea</taxon>
        <taxon>Muridae</taxon>
        <taxon>Murinae</taxon>
        <taxon>Mus</taxon>
        <taxon>Mus</taxon>
    </lineage>
</organism>